<proteinExistence type="inferred from homology"/>
<sequence length="134" mass="15157">MASKFRLQIVTPDRTFLDEEVEMAVVRTVSGDEGILSDHMLMVTPLKIGKMKIQIGDELKEATIAGGFIQVDQDKTIIITDAAEWPEEIDVSRAEEAKQRAEERLQKEREEVDTFRAEIALKKATNRLGLTKNK</sequence>
<gene>
    <name evidence="1" type="primary">atpC</name>
    <name type="ordered locus">Amet_0354</name>
</gene>
<protein>
    <recommendedName>
        <fullName evidence="1">ATP synthase epsilon chain</fullName>
    </recommendedName>
    <alternativeName>
        <fullName evidence="1">ATP synthase F1 sector epsilon subunit</fullName>
    </alternativeName>
    <alternativeName>
        <fullName evidence="1">F-ATPase epsilon subunit</fullName>
    </alternativeName>
</protein>
<keyword id="KW-0066">ATP synthesis</keyword>
<keyword id="KW-1003">Cell membrane</keyword>
<keyword id="KW-0139">CF(1)</keyword>
<keyword id="KW-0375">Hydrogen ion transport</keyword>
<keyword id="KW-0406">Ion transport</keyword>
<keyword id="KW-0472">Membrane</keyword>
<keyword id="KW-1185">Reference proteome</keyword>
<keyword id="KW-0813">Transport</keyword>
<reference key="1">
    <citation type="journal article" date="2016" name="Genome Announc.">
        <title>Complete genome sequence of Alkaliphilus metalliredigens strain QYMF, an alkaliphilic and metal-reducing bacterium isolated from borax-contaminated leachate ponds.</title>
        <authorList>
            <person name="Hwang C."/>
            <person name="Copeland A."/>
            <person name="Lucas S."/>
            <person name="Lapidus A."/>
            <person name="Barry K."/>
            <person name="Detter J.C."/>
            <person name="Glavina Del Rio T."/>
            <person name="Hammon N."/>
            <person name="Israni S."/>
            <person name="Dalin E."/>
            <person name="Tice H."/>
            <person name="Pitluck S."/>
            <person name="Chertkov O."/>
            <person name="Brettin T."/>
            <person name="Bruce D."/>
            <person name="Han C."/>
            <person name="Schmutz J."/>
            <person name="Larimer F."/>
            <person name="Land M.L."/>
            <person name="Hauser L."/>
            <person name="Kyrpides N."/>
            <person name="Mikhailova N."/>
            <person name="Ye Q."/>
            <person name="Zhou J."/>
            <person name="Richardson P."/>
            <person name="Fields M.W."/>
        </authorList>
    </citation>
    <scope>NUCLEOTIDE SEQUENCE [LARGE SCALE GENOMIC DNA]</scope>
    <source>
        <strain>QYMF</strain>
    </source>
</reference>
<evidence type="ECO:0000255" key="1">
    <source>
        <dbReference type="HAMAP-Rule" id="MF_00530"/>
    </source>
</evidence>
<feature type="chain" id="PRO_1000060974" description="ATP synthase epsilon chain">
    <location>
        <begin position="1"/>
        <end position="134"/>
    </location>
</feature>
<name>ATPE_ALKMQ</name>
<organism>
    <name type="scientific">Alkaliphilus metalliredigens (strain QYMF)</name>
    <dbReference type="NCBI Taxonomy" id="293826"/>
    <lineage>
        <taxon>Bacteria</taxon>
        <taxon>Bacillati</taxon>
        <taxon>Bacillota</taxon>
        <taxon>Clostridia</taxon>
        <taxon>Peptostreptococcales</taxon>
        <taxon>Natronincolaceae</taxon>
        <taxon>Alkaliphilus</taxon>
    </lineage>
</organism>
<comment type="function">
    <text evidence="1">Produces ATP from ADP in the presence of a proton gradient across the membrane.</text>
</comment>
<comment type="subunit">
    <text evidence="1">F-type ATPases have 2 components, CF(1) - the catalytic core - and CF(0) - the membrane proton channel. CF(1) has five subunits: alpha(3), beta(3), gamma(1), delta(1), epsilon(1). CF(0) has three main subunits: a, b and c.</text>
</comment>
<comment type="subcellular location">
    <subcellularLocation>
        <location evidence="1">Cell membrane</location>
        <topology evidence="1">Peripheral membrane protein</topology>
    </subcellularLocation>
</comment>
<comment type="similarity">
    <text evidence="1">Belongs to the ATPase epsilon chain family.</text>
</comment>
<dbReference type="EMBL" id="CP000724">
    <property type="protein sequence ID" value="ABR46584.1"/>
    <property type="molecule type" value="Genomic_DNA"/>
</dbReference>
<dbReference type="RefSeq" id="WP_011971492.1">
    <property type="nucleotide sequence ID" value="NC_009633.1"/>
</dbReference>
<dbReference type="SMR" id="A6TK66"/>
<dbReference type="STRING" id="293826.Amet_0354"/>
<dbReference type="KEGG" id="amt:Amet_0354"/>
<dbReference type="eggNOG" id="COG0355">
    <property type="taxonomic scope" value="Bacteria"/>
</dbReference>
<dbReference type="HOGENOM" id="CLU_084338_1_3_9"/>
<dbReference type="OrthoDB" id="9804110at2"/>
<dbReference type="Proteomes" id="UP000001572">
    <property type="component" value="Chromosome"/>
</dbReference>
<dbReference type="GO" id="GO:0005886">
    <property type="term" value="C:plasma membrane"/>
    <property type="evidence" value="ECO:0007669"/>
    <property type="project" value="UniProtKB-SubCell"/>
</dbReference>
<dbReference type="GO" id="GO:0045259">
    <property type="term" value="C:proton-transporting ATP synthase complex"/>
    <property type="evidence" value="ECO:0007669"/>
    <property type="project" value="UniProtKB-KW"/>
</dbReference>
<dbReference type="GO" id="GO:0005524">
    <property type="term" value="F:ATP binding"/>
    <property type="evidence" value="ECO:0007669"/>
    <property type="project" value="UniProtKB-UniRule"/>
</dbReference>
<dbReference type="GO" id="GO:0046933">
    <property type="term" value="F:proton-transporting ATP synthase activity, rotational mechanism"/>
    <property type="evidence" value="ECO:0007669"/>
    <property type="project" value="UniProtKB-UniRule"/>
</dbReference>
<dbReference type="CDD" id="cd12152">
    <property type="entry name" value="F1-ATPase_delta"/>
    <property type="match status" value="1"/>
</dbReference>
<dbReference type="FunFam" id="1.20.5.440:FF:000001">
    <property type="entry name" value="ATP synthase epsilon chain"/>
    <property type="match status" value="1"/>
</dbReference>
<dbReference type="Gene3D" id="1.20.5.440">
    <property type="entry name" value="ATP synthase delta/epsilon subunit, C-terminal domain"/>
    <property type="match status" value="1"/>
</dbReference>
<dbReference type="Gene3D" id="2.60.15.10">
    <property type="entry name" value="F0F1 ATP synthase delta/epsilon subunit, N-terminal"/>
    <property type="match status" value="1"/>
</dbReference>
<dbReference type="HAMAP" id="MF_00530">
    <property type="entry name" value="ATP_synth_epsil_bac"/>
    <property type="match status" value="1"/>
</dbReference>
<dbReference type="InterPro" id="IPR036794">
    <property type="entry name" value="ATP_F1_dsu/esu_C_sf"/>
</dbReference>
<dbReference type="InterPro" id="IPR001469">
    <property type="entry name" value="ATP_synth_F1_dsu/esu"/>
</dbReference>
<dbReference type="InterPro" id="IPR020546">
    <property type="entry name" value="ATP_synth_F1_dsu/esu_N"/>
</dbReference>
<dbReference type="InterPro" id="IPR020547">
    <property type="entry name" value="ATP_synth_F1_esu_C"/>
</dbReference>
<dbReference type="InterPro" id="IPR036771">
    <property type="entry name" value="ATPsynth_dsu/esu_N"/>
</dbReference>
<dbReference type="NCBIfam" id="TIGR01216">
    <property type="entry name" value="ATP_synt_epsi"/>
    <property type="match status" value="1"/>
</dbReference>
<dbReference type="NCBIfam" id="NF001846">
    <property type="entry name" value="PRK00571.1-3"/>
    <property type="match status" value="1"/>
</dbReference>
<dbReference type="NCBIfam" id="NF009980">
    <property type="entry name" value="PRK13446.1"/>
    <property type="match status" value="1"/>
</dbReference>
<dbReference type="PANTHER" id="PTHR13822">
    <property type="entry name" value="ATP SYNTHASE DELTA/EPSILON CHAIN"/>
    <property type="match status" value="1"/>
</dbReference>
<dbReference type="PANTHER" id="PTHR13822:SF10">
    <property type="entry name" value="ATP SYNTHASE EPSILON CHAIN, CHLOROPLASTIC"/>
    <property type="match status" value="1"/>
</dbReference>
<dbReference type="Pfam" id="PF00401">
    <property type="entry name" value="ATP-synt_DE"/>
    <property type="match status" value="1"/>
</dbReference>
<dbReference type="Pfam" id="PF02823">
    <property type="entry name" value="ATP-synt_DE_N"/>
    <property type="match status" value="1"/>
</dbReference>
<dbReference type="SUPFAM" id="SSF46604">
    <property type="entry name" value="Epsilon subunit of F1F0-ATP synthase C-terminal domain"/>
    <property type="match status" value="1"/>
</dbReference>
<dbReference type="SUPFAM" id="SSF51344">
    <property type="entry name" value="Epsilon subunit of F1F0-ATP synthase N-terminal domain"/>
    <property type="match status" value="1"/>
</dbReference>
<accession>A6TK66</accession>